<accession>A2BK08</accession>
<sequence>MGVYHGNDLKKPTGGKKRPHQKVKRKYWMGRYPTFTRLDNRDVRVHIRVRGGNYKIRLKRAAYANVIDPETNTARKVRILRVVETPANPHYARANIIVKGTIIETELGKAVVTSRPGQDGVINAVLIEKRSERPAG</sequence>
<protein>
    <recommendedName>
        <fullName evidence="1">Small ribosomal subunit protein eS8</fullName>
    </recommendedName>
    <alternativeName>
        <fullName evidence="3">30S ribosomal protein S8e</fullName>
    </alternativeName>
</protein>
<comment type="subunit">
    <text evidence="1">Part of the 30S ribosomal subunit.</text>
</comment>
<comment type="similarity">
    <text evidence="1">Belongs to the eukaryotic ribosomal protein eS8 family.</text>
</comment>
<evidence type="ECO:0000255" key="1">
    <source>
        <dbReference type="HAMAP-Rule" id="MF_00029"/>
    </source>
</evidence>
<evidence type="ECO:0000256" key="2">
    <source>
        <dbReference type="SAM" id="MobiDB-lite"/>
    </source>
</evidence>
<evidence type="ECO:0000305" key="3"/>
<gene>
    <name evidence="1" type="primary">rps8e</name>
    <name type="ordered locus">Hbut_0453</name>
</gene>
<name>RS8E_HYPBU</name>
<reference key="1">
    <citation type="journal article" date="2007" name="Archaea">
        <title>The genome of Hyperthermus butylicus: a sulfur-reducing, peptide fermenting, neutrophilic Crenarchaeote growing up to 108 degrees C.</title>
        <authorList>
            <person name="Bruegger K."/>
            <person name="Chen L."/>
            <person name="Stark M."/>
            <person name="Zibat A."/>
            <person name="Redder P."/>
            <person name="Ruepp A."/>
            <person name="Awayez M."/>
            <person name="She Q."/>
            <person name="Garrett R.A."/>
            <person name="Klenk H.-P."/>
        </authorList>
    </citation>
    <scope>NUCLEOTIDE SEQUENCE [LARGE SCALE GENOMIC DNA]</scope>
    <source>
        <strain>DSM 5456 / JCM 9403 / PLM1-5</strain>
    </source>
</reference>
<dbReference type="EMBL" id="CP000493">
    <property type="protein sequence ID" value="ABM80319.1"/>
    <property type="molecule type" value="Genomic_DNA"/>
</dbReference>
<dbReference type="RefSeq" id="WP_011821637.1">
    <property type="nucleotide sequence ID" value="NC_008818.1"/>
</dbReference>
<dbReference type="SMR" id="A2BK08"/>
<dbReference type="STRING" id="415426.Hbut_0453"/>
<dbReference type="EnsemblBacteria" id="ABM80319">
    <property type="protein sequence ID" value="ABM80319"/>
    <property type="gene ID" value="Hbut_0453"/>
</dbReference>
<dbReference type="GeneID" id="4782660"/>
<dbReference type="KEGG" id="hbu:Hbut_0453"/>
<dbReference type="eggNOG" id="arCOG04154">
    <property type="taxonomic scope" value="Archaea"/>
</dbReference>
<dbReference type="HOGENOM" id="CLU_080597_2_1_2"/>
<dbReference type="OrthoDB" id="372305at2157"/>
<dbReference type="Proteomes" id="UP000002593">
    <property type="component" value="Chromosome"/>
</dbReference>
<dbReference type="GO" id="GO:1990904">
    <property type="term" value="C:ribonucleoprotein complex"/>
    <property type="evidence" value="ECO:0007669"/>
    <property type="project" value="UniProtKB-KW"/>
</dbReference>
<dbReference type="GO" id="GO:0005840">
    <property type="term" value="C:ribosome"/>
    <property type="evidence" value="ECO:0007669"/>
    <property type="project" value="UniProtKB-KW"/>
</dbReference>
<dbReference type="GO" id="GO:0003735">
    <property type="term" value="F:structural constituent of ribosome"/>
    <property type="evidence" value="ECO:0007669"/>
    <property type="project" value="InterPro"/>
</dbReference>
<dbReference type="GO" id="GO:0006412">
    <property type="term" value="P:translation"/>
    <property type="evidence" value="ECO:0007669"/>
    <property type="project" value="UniProtKB-UniRule"/>
</dbReference>
<dbReference type="CDD" id="cd11382">
    <property type="entry name" value="Ribosomal_S8e"/>
    <property type="match status" value="1"/>
</dbReference>
<dbReference type="FunFam" id="2.40.10.310:FF:000002">
    <property type="entry name" value="30S ribosomal protein S8e"/>
    <property type="match status" value="1"/>
</dbReference>
<dbReference type="Gene3D" id="2.40.10.310">
    <property type="match status" value="1"/>
</dbReference>
<dbReference type="HAMAP" id="MF_00029">
    <property type="entry name" value="Ribosomal_eS8"/>
    <property type="match status" value="1"/>
</dbReference>
<dbReference type="InterPro" id="IPR001047">
    <property type="entry name" value="Ribosomal_eS8"/>
</dbReference>
<dbReference type="InterPro" id="IPR020919">
    <property type="entry name" value="Ribosomal_protein_eS8_arc"/>
</dbReference>
<dbReference type="InterPro" id="IPR022309">
    <property type="entry name" value="Ribosomal_Se8/biogenesis_NSA2"/>
</dbReference>
<dbReference type="NCBIfam" id="TIGR00307">
    <property type="entry name" value="eS8"/>
    <property type="match status" value="1"/>
</dbReference>
<dbReference type="PANTHER" id="PTHR10394">
    <property type="entry name" value="40S RIBOSOMAL PROTEIN S8"/>
    <property type="match status" value="1"/>
</dbReference>
<dbReference type="Pfam" id="PF01201">
    <property type="entry name" value="Ribosomal_S8e"/>
    <property type="match status" value="1"/>
</dbReference>
<keyword id="KW-1185">Reference proteome</keyword>
<keyword id="KW-0687">Ribonucleoprotein</keyword>
<keyword id="KW-0689">Ribosomal protein</keyword>
<feature type="chain" id="PRO_1000002337" description="Small ribosomal subunit protein eS8">
    <location>
        <begin position="1"/>
        <end position="136"/>
    </location>
</feature>
<feature type="region of interest" description="Disordered" evidence="2">
    <location>
        <begin position="1"/>
        <end position="23"/>
    </location>
</feature>
<feature type="compositionally biased region" description="Basic residues" evidence="2">
    <location>
        <begin position="13"/>
        <end position="23"/>
    </location>
</feature>
<organism>
    <name type="scientific">Hyperthermus butylicus (strain DSM 5456 / JCM 9403 / PLM1-5)</name>
    <dbReference type="NCBI Taxonomy" id="415426"/>
    <lineage>
        <taxon>Archaea</taxon>
        <taxon>Thermoproteota</taxon>
        <taxon>Thermoprotei</taxon>
        <taxon>Desulfurococcales</taxon>
        <taxon>Pyrodictiaceae</taxon>
        <taxon>Hyperthermus</taxon>
    </lineage>
</organism>
<proteinExistence type="inferred from homology"/>